<name>MDH_LEPBJ</name>
<sequence>MGKTVKVAVTGAAGQIGYSLLFRIASGQMFGTDTAVEIQMLELEAAIPAAKGVIMELEDCAFPLLQKVTVSSDLDIAFKDINWALLVGSVPRKAGMERGDLLKINGGIFINQGKAIEKNAASDVRVLVVGNPCNTNCLIAMNNAKGIPSDRWFAMTKLDENRAKSQLASKAGVPVKEVTHLGIWGNHSSTQYPDFYNAKISGKPVTDVISDHEWLKGDFIKNVQQRGAEIIKARGASSAASAANGVVDTVRAIITPTASGDAFSAAIASDGSYGTEKGLIFGFPLKSDGKKVGIVQGLPFNDFAKEKFKTTHDELISERNEVKDML</sequence>
<feature type="chain" id="PRO_0000294388" description="Malate dehydrogenase">
    <location>
        <begin position="1"/>
        <end position="326"/>
    </location>
</feature>
<feature type="active site" description="Proton acceptor" evidence="1">
    <location>
        <position position="187"/>
    </location>
</feature>
<feature type="binding site" evidence="1">
    <location>
        <begin position="11"/>
        <end position="17"/>
    </location>
    <ligand>
        <name>NAD(+)</name>
        <dbReference type="ChEBI" id="CHEBI:57540"/>
    </ligand>
</feature>
<feature type="binding site" evidence="1">
    <location>
        <position position="92"/>
    </location>
    <ligand>
        <name>substrate</name>
    </ligand>
</feature>
<feature type="binding site" evidence="1">
    <location>
        <position position="98"/>
    </location>
    <ligand>
        <name>substrate</name>
    </ligand>
</feature>
<feature type="binding site" evidence="1">
    <location>
        <position position="105"/>
    </location>
    <ligand>
        <name>NAD(+)</name>
        <dbReference type="ChEBI" id="CHEBI:57540"/>
    </ligand>
</feature>
<feature type="binding site" evidence="1">
    <location>
        <position position="112"/>
    </location>
    <ligand>
        <name>NAD(+)</name>
        <dbReference type="ChEBI" id="CHEBI:57540"/>
    </ligand>
</feature>
<feature type="binding site" evidence="1">
    <location>
        <begin position="129"/>
        <end position="131"/>
    </location>
    <ligand>
        <name>NAD(+)</name>
        <dbReference type="ChEBI" id="CHEBI:57540"/>
    </ligand>
</feature>
<feature type="binding site" evidence="1">
    <location>
        <position position="131"/>
    </location>
    <ligand>
        <name>substrate</name>
    </ligand>
</feature>
<feature type="binding site" evidence="1">
    <location>
        <position position="162"/>
    </location>
    <ligand>
        <name>substrate</name>
    </ligand>
</feature>
<reference key="1">
    <citation type="journal article" date="2006" name="Proc. Natl. Acad. Sci. U.S.A.">
        <title>Genome reduction in Leptospira borgpetersenii reflects limited transmission potential.</title>
        <authorList>
            <person name="Bulach D.M."/>
            <person name="Zuerner R.L."/>
            <person name="Wilson P."/>
            <person name="Seemann T."/>
            <person name="McGrath A."/>
            <person name="Cullen P.A."/>
            <person name="Davis J."/>
            <person name="Johnson M."/>
            <person name="Kuczek E."/>
            <person name="Alt D.P."/>
            <person name="Peterson-Burch B."/>
            <person name="Coppel R.L."/>
            <person name="Rood J.I."/>
            <person name="Davies J.K."/>
            <person name="Adler B."/>
        </authorList>
    </citation>
    <scope>NUCLEOTIDE SEQUENCE [LARGE SCALE GENOMIC DNA]</scope>
    <source>
        <strain>JB197</strain>
    </source>
</reference>
<dbReference type="EC" id="1.1.1.37" evidence="1"/>
<dbReference type="EMBL" id="CP000350">
    <property type="protein sequence ID" value="ABJ76395.1"/>
    <property type="molecule type" value="Genomic_DNA"/>
</dbReference>
<dbReference type="RefSeq" id="WP_011670105.1">
    <property type="nucleotide sequence ID" value="NC_008510.1"/>
</dbReference>
<dbReference type="SMR" id="Q04RS5"/>
<dbReference type="KEGG" id="lbj:LBJ_1874"/>
<dbReference type="HOGENOM" id="CLU_040727_2_0_12"/>
<dbReference type="Proteomes" id="UP000000656">
    <property type="component" value="Chromosome 1"/>
</dbReference>
<dbReference type="GO" id="GO:0030060">
    <property type="term" value="F:L-malate dehydrogenase (NAD+) activity"/>
    <property type="evidence" value="ECO:0007669"/>
    <property type="project" value="UniProtKB-UniRule"/>
</dbReference>
<dbReference type="GO" id="GO:0006108">
    <property type="term" value="P:malate metabolic process"/>
    <property type="evidence" value="ECO:0007669"/>
    <property type="project" value="InterPro"/>
</dbReference>
<dbReference type="GO" id="GO:0006099">
    <property type="term" value="P:tricarboxylic acid cycle"/>
    <property type="evidence" value="ECO:0007669"/>
    <property type="project" value="UniProtKB-UniRule"/>
</dbReference>
<dbReference type="CDD" id="cd01338">
    <property type="entry name" value="MDH_chloroplast-like"/>
    <property type="match status" value="1"/>
</dbReference>
<dbReference type="FunFam" id="3.40.50.720:FF:000010">
    <property type="entry name" value="Malate dehydrogenase"/>
    <property type="match status" value="1"/>
</dbReference>
<dbReference type="FunFam" id="3.90.110.10:FF:000002">
    <property type="entry name" value="Malate dehydrogenase"/>
    <property type="match status" value="1"/>
</dbReference>
<dbReference type="Gene3D" id="3.90.110.10">
    <property type="entry name" value="Lactate dehydrogenase/glycoside hydrolase, family 4, C-terminal"/>
    <property type="match status" value="1"/>
</dbReference>
<dbReference type="Gene3D" id="3.40.50.720">
    <property type="entry name" value="NAD(P)-binding Rossmann-like Domain"/>
    <property type="match status" value="1"/>
</dbReference>
<dbReference type="HAMAP" id="MF_01517">
    <property type="entry name" value="Malate_dehydrog_2"/>
    <property type="match status" value="1"/>
</dbReference>
<dbReference type="InterPro" id="IPR001557">
    <property type="entry name" value="L-lactate/malate_DH"/>
</dbReference>
<dbReference type="InterPro" id="IPR022383">
    <property type="entry name" value="Lactate/malate_DH_C"/>
</dbReference>
<dbReference type="InterPro" id="IPR001236">
    <property type="entry name" value="Lactate/malate_DH_N"/>
</dbReference>
<dbReference type="InterPro" id="IPR015955">
    <property type="entry name" value="Lactate_DH/Glyco_Ohase_4_C"/>
</dbReference>
<dbReference type="InterPro" id="IPR001252">
    <property type="entry name" value="Malate_DH_AS"/>
</dbReference>
<dbReference type="InterPro" id="IPR010945">
    <property type="entry name" value="Malate_DH_type2"/>
</dbReference>
<dbReference type="InterPro" id="IPR036291">
    <property type="entry name" value="NAD(P)-bd_dom_sf"/>
</dbReference>
<dbReference type="NCBIfam" id="TIGR01759">
    <property type="entry name" value="MalateDH-SF1"/>
    <property type="match status" value="1"/>
</dbReference>
<dbReference type="NCBIfam" id="NF003916">
    <property type="entry name" value="PRK05442.1"/>
    <property type="match status" value="1"/>
</dbReference>
<dbReference type="PANTHER" id="PTHR23382">
    <property type="entry name" value="MALATE DEHYDROGENASE"/>
    <property type="match status" value="1"/>
</dbReference>
<dbReference type="Pfam" id="PF02866">
    <property type="entry name" value="Ldh_1_C"/>
    <property type="match status" value="1"/>
</dbReference>
<dbReference type="Pfam" id="PF00056">
    <property type="entry name" value="Ldh_1_N"/>
    <property type="match status" value="1"/>
</dbReference>
<dbReference type="PIRSF" id="PIRSF000102">
    <property type="entry name" value="Lac_mal_DH"/>
    <property type="match status" value="1"/>
</dbReference>
<dbReference type="SUPFAM" id="SSF56327">
    <property type="entry name" value="LDH C-terminal domain-like"/>
    <property type="match status" value="1"/>
</dbReference>
<dbReference type="SUPFAM" id="SSF51735">
    <property type="entry name" value="NAD(P)-binding Rossmann-fold domains"/>
    <property type="match status" value="1"/>
</dbReference>
<dbReference type="PROSITE" id="PS00068">
    <property type="entry name" value="MDH"/>
    <property type="match status" value="1"/>
</dbReference>
<gene>
    <name evidence="1" type="primary">mdh</name>
    <name type="ordered locus">LBJ_1874</name>
</gene>
<comment type="function">
    <text evidence="1">Catalyzes the reversible oxidation of malate to oxaloacetate.</text>
</comment>
<comment type="catalytic activity">
    <reaction evidence="1">
        <text>(S)-malate + NAD(+) = oxaloacetate + NADH + H(+)</text>
        <dbReference type="Rhea" id="RHEA:21432"/>
        <dbReference type="ChEBI" id="CHEBI:15378"/>
        <dbReference type="ChEBI" id="CHEBI:15589"/>
        <dbReference type="ChEBI" id="CHEBI:16452"/>
        <dbReference type="ChEBI" id="CHEBI:57540"/>
        <dbReference type="ChEBI" id="CHEBI:57945"/>
        <dbReference type="EC" id="1.1.1.37"/>
    </reaction>
</comment>
<comment type="similarity">
    <text evidence="1">Belongs to the LDH/MDH superfamily. MDH type 2 family.</text>
</comment>
<proteinExistence type="inferred from homology"/>
<accession>Q04RS5</accession>
<evidence type="ECO:0000255" key="1">
    <source>
        <dbReference type="HAMAP-Rule" id="MF_01517"/>
    </source>
</evidence>
<protein>
    <recommendedName>
        <fullName evidence="1">Malate dehydrogenase</fullName>
        <ecNumber evidence="1">1.1.1.37</ecNumber>
    </recommendedName>
</protein>
<organism>
    <name type="scientific">Leptospira borgpetersenii serovar Hardjo-bovis (strain JB197)</name>
    <dbReference type="NCBI Taxonomy" id="355277"/>
    <lineage>
        <taxon>Bacteria</taxon>
        <taxon>Pseudomonadati</taxon>
        <taxon>Spirochaetota</taxon>
        <taxon>Spirochaetia</taxon>
        <taxon>Leptospirales</taxon>
        <taxon>Leptospiraceae</taxon>
        <taxon>Leptospira</taxon>
    </lineage>
</organism>
<keyword id="KW-0520">NAD</keyword>
<keyword id="KW-0560">Oxidoreductase</keyword>
<keyword id="KW-0816">Tricarboxylic acid cycle</keyword>